<protein>
    <recommendedName>
        <fullName evidence="1">Elongation factor Ts</fullName>
        <shortName evidence="1">EF-Ts</shortName>
    </recommendedName>
</protein>
<evidence type="ECO:0000255" key="1">
    <source>
        <dbReference type="HAMAP-Rule" id="MF_00050"/>
    </source>
</evidence>
<sequence>MITAKMVKELREITGAGMMDCKKALTETNGDTEKAVEVLREKGLAAAAKKSGRIAAEGLVETYIAEDKKNASIVEVNCETDFVAANEEFKGLVANIAKQAANTKAEDVDSFIEEKYIGSEEGTIKDAVTALVAKLGENMSVRRFKQLSVENGIIESYIHGDGKIGVLVELECEKESEVLSEVAKDVAMQVAAVNPPFLDRTFVDEETLDKEREIYRVQALNEGKPEKIVDKMVEGRIQKYYKENCLVEQVWVRNSDYTIDKYVKEKSKEVGADIKVANFVRFEKGEGIEKKEEDFAEEVKKQMQ</sequence>
<accession>Q895L1</accession>
<comment type="function">
    <text evidence="1">Associates with the EF-Tu.GDP complex and induces the exchange of GDP to GTP. It remains bound to the aminoacyl-tRNA.EF-Tu.GTP complex up to the GTP hydrolysis stage on the ribosome.</text>
</comment>
<comment type="subcellular location">
    <subcellularLocation>
        <location evidence="1">Cytoplasm</location>
    </subcellularLocation>
</comment>
<comment type="similarity">
    <text evidence="1">Belongs to the EF-Ts family.</text>
</comment>
<proteinExistence type="inferred from homology"/>
<organism>
    <name type="scientific">Clostridium tetani (strain Massachusetts / E88)</name>
    <dbReference type="NCBI Taxonomy" id="212717"/>
    <lineage>
        <taxon>Bacteria</taxon>
        <taxon>Bacillati</taxon>
        <taxon>Bacillota</taxon>
        <taxon>Clostridia</taxon>
        <taxon>Eubacteriales</taxon>
        <taxon>Clostridiaceae</taxon>
        <taxon>Clostridium</taxon>
    </lineage>
</organism>
<gene>
    <name evidence="1" type="primary">tsf</name>
    <name type="ordered locus">CTC_01262</name>
</gene>
<dbReference type="EMBL" id="AE015927">
    <property type="protein sequence ID" value="AAO35829.1"/>
    <property type="molecule type" value="Genomic_DNA"/>
</dbReference>
<dbReference type="RefSeq" id="WP_011099491.1">
    <property type="nucleotide sequence ID" value="NC_004557.1"/>
</dbReference>
<dbReference type="SMR" id="Q895L1"/>
<dbReference type="STRING" id="212717.CTC_01262"/>
<dbReference type="GeneID" id="24253734"/>
<dbReference type="KEGG" id="ctc:CTC_01262"/>
<dbReference type="HOGENOM" id="CLU_047155_0_0_9"/>
<dbReference type="OrthoDB" id="9808348at2"/>
<dbReference type="Proteomes" id="UP000001412">
    <property type="component" value="Chromosome"/>
</dbReference>
<dbReference type="GO" id="GO:0005737">
    <property type="term" value="C:cytoplasm"/>
    <property type="evidence" value="ECO:0007669"/>
    <property type="project" value="UniProtKB-SubCell"/>
</dbReference>
<dbReference type="GO" id="GO:0003746">
    <property type="term" value="F:translation elongation factor activity"/>
    <property type="evidence" value="ECO:0007669"/>
    <property type="project" value="UniProtKB-UniRule"/>
</dbReference>
<dbReference type="CDD" id="cd14275">
    <property type="entry name" value="UBA_EF-Ts"/>
    <property type="match status" value="1"/>
</dbReference>
<dbReference type="FunFam" id="1.10.286.20:FF:000001">
    <property type="entry name" value="Elongation factor Ts"/>
    <property type="match status" value="1"/>
</dbReference>
<dbReference type="FunFam" id="1.10.8.10:FF:000001">
    <property type="entry name" value="Elongation factor Ts"/>
    <property type="match status" value="1"/>
</dbReference>
<dbReference type="Gene3D" id="1.10.286.20">
    <property type="match status" value="1"/>
</dbReference>
<dbReference type="Gene3D" id="1.10.8.10">
    <property type="entry name" value="DNA helicase RuvA subunit, C-terminal domain"/>
    <property type="match status" value="1"/>
</dbReference>
<dbReference type="Gene3D" id="3.30.479.20">
    <property type="entry name" value="Elongation factor Ts, dimerisation domain"/>
    <property type="match status" value="2"/>
</dbReference>
<dbReference type="HAMAP" id="MF_00050">
    <property type="entry name" value="EF_Ts"/>
    <property type="match status" value="1"/>
</dbReference>
<dbReference type="InterPro" id="IPR036402">
    <property type="entry name" value="EF-Ts_dimer_sf"/>
</dbReference>
<dbReference type="InterPro" id="IPR001816">
    <property type="entry name" value="Transl_elong_EFTs/EF1B"/>
</dbReference>
<dbReference type="InterPro" id="IPR014039">
    <property type="entry name" value="Transl_elong_EFTs/EF1B_dimer"/>
</dbReference>
<dbReference type="InterPro" id="IPR018101">
    <property type="entry name" value="Transl_elong_Ts_CS"/>
</dbReference>
<dbReference type="InterPro" id="IPR009060">
    <property type="entry name" value="UBA-like_sf"/>
</dbReference>
<dbReference type="NCBIfam" id="TIGR00116">
    <property type="entry name" value="tsf"/>
    <property type="match status" value="1"/>
</dbReference>
<dbReference type="PANTHER" id="PTHR11741">
    <property type="entry name" value="ELONGATION FACTOR TS"/>
    <property type="match status" value="1"/>
</dbReference>
<dbReference type="PANTHER" id="PTHR11741:SF0">
    <property type="entry name" value="ELONGATION FACTOR TS, MITOCHONDRIAL"/>
    <property type="match status" value="1"/>
</dbReference>
<dbReference type="Pfam" id="PF00889">
    <property type="entry name" value="EF_TS"/>
    <property type="match status" value="1"/>
</dbReference>
<dbReference type="SUPFAM" id="SSF54713">
    <property type="entry name" value="Elongation factor Ts (EF-Ts), dimerisation domain"/>
    <property type="match status" value="2"/>
</dbReference>
<dbReference type="SUPFAM" id="SSF46934">
    <property type="entry name" value="UBA-like"/>
    <property type="match status" value="1"/>
</dbReference>
<dbReference type="PROSITE" id="PS01126">
    <property type="entry name" value="EF_TS_1"/>
    <property type="match status" value="1"/>
</dbReference>
<dbReference type="PROSITE" id="PS01127">
    <property type="entry name" value="EF_TS_2"/>
    <property type="match status" value="1"/>
</dbReference>
<name>EFTS_CLOTE</name>
<feature type="chain" id="PRO_0000161109" description="Elongation factor Ts">
    <location>
        <begin position="1"/>
        <end position="304"/>
    </location>
</feature>
<feature type="region of interest" description="Involved in Mg(2+) ion dislocation from EF-Tu" evidence="1">
    <location>
        <begin position="80"/>
        <end position="83"/>
    </location>
</feature>
<keyword id="KW-0963">Cytoplasm</keyword>
<keyword id="KW-0251">Elongation factor</keyword>
<keyword id="KW-0648">Protein biosynthesis</keyword>
<keyword id="KW-1185">Reference proteome</keyword>
<reference key="1">
    <citation type="journal article" date="2003" name="Proc. Natl. Acad. Sci. U.S.A.">
        <title>The genome sequence of Clostridium tetani, the causative agent of tetanus disease.</title>
        <authorList>
            <person name="Brueggemann H."/>
            <person name="Baeumer S."/>
            <person name="Fricke W.F."/>
            <person name="Wiezer A."/>
            <person name="Liesegang H."/>
            <person name="Decker I."/>
            <person name="Herzberg C."/>
            <person name="Martinez-Arias R."/>
            <person name="Merkl R."/>
            <person name="Henne A."/>
            <person name="Gottschalk G."/>
        </authorList>
    </citation>
    <scope>NUCLEOTIDE SEQUENCE [LARGE SCALE GENOMIC DNA]</scope>
    <source>
        <strain>Massachusetts / E88</strain>
    </source>
</reference>